<proteinExistence type="evidence at transcript level"/>
<accession>Q29RS4</accession>
<sequence length="244" mass="26384">MNGPADGEVDYKKKYRNLKRKLKFLIYEHECFQEELRKAQRKLLKVSRDKSFLLDRLLQYENVDEDSSDSDATASSDNSETEGTPKLSDTPAPKRKRSPPLGGAPSPSSLSLPPSTGFPLQASRAPSPYLSSLASPTYPPFPSDYLALQLPEPSPLRPKREKRPRLPRKLKMAVGPPDCPVGGPLTFPGRGSGAGVGAALAPLPPPKMPPPTILSAVPRQMFSDAGSGDDALDGDDDLVIDIPE</sequence>
<feature type="chain" id="PRO_0000234291" description="INO80 complex subunit E">
    <location>
        <begin position="1"/>
        <end position="244"/>
    </location>
</feature>
<feature type="region of interest" description="Disordered" evidence="3">
    <location>
        <begin position="59"/>
        <end position="187"/>
    </location>
</feature>
<feature type="region of interest" description="Disordered" evidence="3">
    <location>
        <begin position="222"/>
        <end position="244"/>
    </location>
</feature>
<feature type="coiled-coil region" evidence="2">
    <location>
        <begin position="10"/>
        <end position="54"/>
    </location>
</feature>
<feature type="compositionally biased region" description="Low complexity" evidence="3">
    <location>
        <begin position="99"/>
        <end position="115"/>
    </location>
</feature>
<feature type="compositionally biased region" description="Low complexity" evidence="3">
    <location>
        <begin position="122"/>
        <end position="136"/>
    </location>
</feature>
<feature type="compositionally biased region" description="Basic residues" evidence="3">
    <location>
        <begin position="157"/>
        <end position="171"/>
    </location>
</feature>
<feature type="compositionally biased region" description="Acidic residues" evidence="3">
    <location>
        <begin position="230"/>
        <end position="244"/>
    </location>
</feature>
<feature type="cross-link" description="Glycyl lysine isopeptide (Lys-Gly) (interchain with G-Cter in SUMO2)" evidence="1">
    <location>
        <position position="159"/>
    </location>
</feature>
<feature type="cross-link" description="Glycyl lysine isopeptide (Lys-Gly) (interchain with G-Cter in SUMO2)" evidence="1">
    <location>
        <position position="171"/>
    </location>
</feature>
<gene>
    <name type="primary">INO80E</name>
    <name type="synonym">CCDC95</name>
</gene>
<keyword id="KW-0175">Coiled coil</keyword>
<keyword id="KW-0227">DNA damage</keyword>
<keyword id="KW-0233">DNA recombination</keyword>
<keyword id="KW-0234">DNA repair</keyword>
<keyword id="KW-1017">Isopeptide bond</keyword>
<keyword id="KW-0539">Nucleus</keyword>
<keyword id="KW-1185">Reference proteome</keyword>
<keyword id="KW-0804">Transcription</keyword>
<keyword id="KW-0805">Transcription regulation</keyword>
<keyword id="KW-0832">Ubl conjugation</keyword>
<evidence type="ECO:0000250" key="1">
    <source>
        <dbReference type="UniProtKB" id="Q8NBZ0"/>
    </source>
</evidence>
<evidence type="ECO:0000255" key="2"/>
<evidence type="ECO:0000256" key="3">
    <source>
        <dbReference type="SAM" id="MobiDB-lite"/>
    </source>
</evidence>
<dbReference type="EMBL" id="BC114048">
    <property type="protein sequence ID" value="AAI14049.1"/>
    <property type="molecule type" value="mRNA"/>
</dbReference>
<dbReference type="RefSeq" id="NP_001040009.1">
    <property type="nucleotide sequence ID" value="NM_001046544.1"/>
</dbReference>
<dbReference type="SMR" id="Q29RS4"/>
<dbReference type="FunCoup" id="Q29RS4">
    <property type="interactions" value="2742"/>
</dbReference>
<dbReference type="STRING" id="9913.ENSBTAP00000006625"/>
<dbReference type="PaxDb" id="9913-ENSBTAP00000006625"/>
<dbReference type="GeneID" id="614852"/>
<dbReference type="KEGG" id="bta:614852"/>
<dbReference type="CTD" id="283899"/>
<dbReference type="VEuPathDB" id="HostDB:ENSBTAG00000005030"/>
<dbReference type="eggNOG" id="ENOG502RZ5F">
    <property type="taxonomic scope" value="Eukaryota"/>
</dbReference>
<dbReference type="InParanoid" id="Q29RS4"/>
<dbReference type="OMA" id="FSWVPKQ"/>
<dbReference type="OrthoDB" id="5977486at2759"/>
<dbReference type="Reactome" id="R-BTA-5689603">
    <property type="pathway name" value="UCH proteinases"/>
</dbReference>
<dbReference type="Reactome" id="R-BTA-5696394">
    <property type="pathway name" value="DNA Damage Recognition in GG-NER"/>
</dbReference>
<dbReference type="Proteomes" id="UP000009136">
    <property type="component" value="Chromosome 25"/>
</dbReference>
<dbReference type="Bgee" id="ENSBTAG00000005030">
    <property type="expression patterns" value="Expressed in spermatocyte and 106 other cell types or tissues"/>
</dbReference>
<dbReference type="GO" id="GO:0031011">
    <property type="term" value="C:Ino80 complex"/>
    <property type="evidence" value="ECO:0000318"/>
    <property type="project" value="GO_Central"/>
</dbReference>
<dbReference type="GO" id="GO:0006338">
    <property type="term" value="P:chromatin remodeling"/>
    <property type="evidence" value="ECO:0007669"/>
    <property type="project" value="InterPro"/>
</dbReference>
<dbReference type="GO" id="GO:0006310">
    <property type="term" value="P:DNA recombination"/>
    <property type="evidence" value="ECO:0007669"/>
    <property type="project" value="UniProtKB-KW"/>
</dbReference>
<dbReference type="GO" id="GO:0006281">
    <property type="term" value="P:DNA repair"/>
    <property type="evidence" value="ECO:0007669"/>
    <property type="project" value="UniProtKB-KW"/>
</dbReference>
<dbReference type="InterPro" id="IPR026678">
    <property type="entry name" value="INO80E"/>
</dbReference>
<dbReference type="InterPro" id="IPR056515">
    <property type="entry name" value="INO80E_N"/>
</dbReference>
<dbReference type="PANTHER" id="PTHR21812">
    <property type="entry name" value="INO80 COMPLEX SUBUNIT E"/>
    <property type="match status" value="1"/>
</dbReference>
<dbReference type="PANTHER" id="PTHR21812:SF1">
    <property type="entry name" value="INO80 COMPLEX SUBUNIT E"/>
    <property type="match status" value="1"/>
</dbReference>
<dbReference type="Pfam" id="PF24237">
    <property type="entry name" value="INO80E"/>
    <property type="match status" value="1"/>
</dbReference>
<comment type="function">
    <text>Putative regulatory component of the chromatin remodeling INO80 complex which is involved in transcriptional regulation, DNA replication and probably DNA repair.</text>
</comment>
<comment type="subunit">
    <text>Component of the chromatin remodeling INO80 complex; specifically part of a complex module associated with the N-terminus of INO80.</text>
</comment>
<comment type="subcellular location">
    <subcellularLocation>
        <location>Nucleus</location>
    </subcellularLocation>
</comment>
<protein>
    <recommendedName>
        <fullName>INO80 complex subunit E</fullName>
    </recommendedName>
    <alternativeName>
        <fullName>Coiled-coil domain-containing protein 95</fullName>
    </alternativeName>
</protein>
<organism>
    <name type="scientific">Bos taurus</name>
    <name type="common">Bovine</name>
    <dbReference type="NCBI Taxonomy" id="9913"/>
    <lineage>
        <taxon>Eukaryota</taxon>
        <taxon>Metazoa</taxon>
        <taxon>Chordata</taxon>
        <taxon>Craniata</taxon>
        <taxon>Vertebrata</taxon>
        <taxon>Euteleostomi</taxon>
        <taxon>Mammalia</taxon>
        <taxon>Eutheria</taxon>
        <taxon>Laurasiatheria</taxon>
        <taxon>Artiodactyla</taxon>
        <taxon>Ruminantia</taxon>
        <taxon>Pecora</taxon>
        <taxon>Bovidae</taxon>
        <taxon>Bovinae</taxon>
        <taxon>Bos</taxon>
    </lineage>
</organism>
<name>IN80E_BOVIN</name>
<reference key="1">
    <citation type="submission" date="2006-02" db="EMBL/GenBank/DDBJ databases">
        <authorList>
            <consortium name="NIH - Mammalian Gene Collection (MGC) project"/>
        </authorList>
    </citation>
    <scope>NUCLEOTIDE SEQUENCE [LARGE SCALE MRNA]</scope>
    <source>
        <strain>Hereford</strain>
        <tissue>Testis</tissue>
    </source>
</reference>